<keyword id="KW-1003">Cell membrane</keyword>
<keyword id="KW-0217">Developmental protein</keyword>
<keyword id="KW-1015">Disulfide bond</keyword>
<keyword id="KW-0297">G-protein coupled receptor</keyword>
<keyword id="KW-0325">Glycoprotein</keyword>
<keyword id="KW-0472">Membrane</keyword>
<keyword id="KW-0675">Receptor</keyword>
<keyword id="KW-1185">Reference proteome</keyword>
<keyword id="KW-0732">Signal</keyword>
<keyword id="KW-0807">Transducer</keyword>
<keyword id="KW-0812">Transmembrane</keyword>
<keyword id="KW-1133">Transmembrane helix</keyword>
<keyword id="KW-0832">Ubl conjugation</keyword>
<keyword id="KW-0879">Wnt signaling pathway</keyword>
<comment type="function">
    <text evidence="2">Receptor for Wnt proteins. Most of frizzled receptors are coupled to the beta-catenin canonical signaling pathway, which leads to the activation of disheveled proteins, inhibition of GSK-3 kinase, nuclear accumulation of beta-catenin and activation of Wnt target genes (By similarity). A second signaling pathway involving PKC and calcium fluxes has been seen for some family members, but it is not yet clear if it represents a distinct pathway or if it can be integrated in the canonical pathway, as PKC seems to be required for Wnt-mediated inactivation of GSK-3 kinase. Both pathways seem to involve interactions with G-proteins. May be involved in transduction and intercellular transmission of polarity information during tissue morphogenesis and/or in differentiated tissues.</text>
</comment>
<comment type="subcellular location">
    <subcellularLocation>
        <location>Membrane</location>
        <topology>Multi-pass membrane protein</topology>
    </subcellularLocation>
    <subcellularLocation>
        <location evidence="1">Cell membrane</location>
        <topology evidence="1">Multi-pass membrane protein</topology>
    </subcellularLocation>
</comment>
<comment type="tissue specificity">
    <text>Expressed in embryonic and adult heart, lung, chondrocytes and brain. Also expressed in the developing gastrointestinal tract (strongest in foregut), much weaker expression in the adult. No expression in fetal liver and adult spleen. Up-regulated in esophageal squamous cell carcinomas.</text>
</comment>
<comment type="domain">
    <text evidence="1">Lys-Thr-X-X-X-Trp motif interacts with the PDZ domain of Dvl (Disheveled) family members and is involved in the activation of the Wnt/beta-catenin signaling pathway.</text>
</comment>
<comment type="domain">
    <text evidence="1">The FZ domain is involved in binding with Wnt ligands.</text>
</comment>
<comment type="PTM">
    <text evidence="1">Ubiquitinated by ZNRF3, leading to its degradation by the proteasome.</text>
</comment>
<comment type="similarity">
    <text evidence="6">Belongs to the G-protein coupled receptor Fz/Smo family.</text>
</comment>
<dbReference type="EMBL" id="AF206321">
    <property type="protein sequence ID" value="AAF74056.1"/>
    <property type="molecule type" value="mRNA"/>
</dbReference>
<dbReference type="EMBL" id="AF206322">
    <property type="protein sequence ID" value="AAF74057.1"/>
    <property type="molecule type" value="mRNA"/>
</dbReference>
<dbReference type="EMBL" id="BC049774">
    <property type="protein sequence ID" value="AAH49774.2"/>
    <property type="molecule type" value="mRNA"/>
</dbReference>
<dbReference type="EMBL" id="BC055727">
    <property type="protein sequence ID" value="AAH55727.1"/>
    <property type="molecule type" value="mRNA"/>
</dbReference>
<dbReference type="EMBL" id="AF139183">
    <property type="protein sequence ID" value="AAD28286.1"/>
    <property type="molecule type" value="mRNA"/>
</dbReference>
<dbReference type="CCDS" id="CCDS25501.1"/>
<dbReference type="RefSeq" id="NP_065256.1">
    <property type="nucleotide sequence ID" value="NM_020510.2"/>
</dbReference>
<dbReference type="SMR" id="Q9JIP6"/>
<dbReference type="BioGRID" id="208235">
    <property type="interactions" value="1"/>
</dbReference>
<dbReference type="FunCoup" id="Q9JIP6">
    <property type="interactions" value="950"/>
</dbReference>
<dbReference type="IntAct" id="Q9JIP6">
    <property type="interactions" value="1"/>
</dbReference>
<dbReference type="MINT" id="Q9JIP6"/>
<dbReference type="STRING" id="10090.ENSMUSP00000091463"/>
<dbReference type="ChEMBL" id="CHEMBL4879521"/>
<dbReference type="GlyCosmos" id="Q9JIP6">
    <property type="glycosylation" value="2 sites, No reported glycans"/>
</dbReference>
<dbReference type="GlyGen" id="Q9JIP6">
    <property type="glycosylation" value="3 sites, 1 N-linked glycan (1 site)"/>
</dbReference>
<dbReference type="iPTMnet" id="Q9JIP6"/>
<dbReference type="PhosphoSitePlus" id="Q9JIP6"/>
<dbReference type="PaxDb" id="10090-ENSMUSP00000091463"/>
<dbReference type="PeptideAtlas" id="Q9JIP6"/>
<dbReference type="ProteomicsDB" id="272924"/>
<dbReference type="Pumba" id="Q9JIP6"/>
<dbReference type="Antibodypedia" id="17503">
    <property type="antibodies" value="354 antibodies from 36 providers"/>
</dbReference>
<dbReference type="DNASU" id="57265"/>
<dbReference type="Ensembl" id="ENSMUST00000057893.7">
    <property type="protein sequence ID" value="ENSMUSP00000091463.5"/>
    <property type="gene ID" value="ENSMUSG00000050288.7"/>
</dbReference>
<dbReference type="GeneID" id="57265"/>
<dbReference type="KEGG" id="mmu:57265"/>
<dbReference type="UCSC" id="uc011yft.1">
    <property type="organism name" value="mouse"/>
</dbReference>
<dbReference type="AGR" id="MGI:1888513"/>
<dbReference type="CTD" id="2535"/>
<dbReference type="MGI" id="MGI:1888513">
    <property type="gene designation" value="Fzd2"/>
</dbReference>
<dbReference type="VEuPathDB" id="HostDB:ENSMUSG00000050288"/>
<dbReference type="eggNOG" id="KOG3577">
    <property type="taxonomic scope" value="Eukaryota"/>
</dbReference>
<dbReference type="GeneTree" id="ENSGT00940000161812"/>
<dbReference type="HOGENOM" id="CLU_007873_2_1_1"/>
<dbReference type="InParanoid" id="Q9JIP6"/>
<dbReference type="OMA" id="CPMHPGP"/>
<dbReference type="OrthoDB" id="10053709at2759"/>
<dbReference type="PhylomeDB" id="Q9JIP6"/>
<dbReference type="TreeFam" id="TF317907"/>
<dbReference type="Reactome" id="R-MMU-4086398">
    <property type="pathway name" value="Ca2+ pathway"/>
</dbReference>
<dbReference type="Reactome" id="R-MMU-4608870">
    <property type="pathway name" value="Asymmetric localization of PCP proteins"/>
</dbReference>
<dbReference type="Reactome" id="R-MMU-4641262">
    <property type="pathway name" value="Disassembly of the destruction complex and recruitment of AXIN to the membrane"/>
</dbReference>
<dbReference type="Reactome" id="R-MMU-5140745">
    <property type="pathway name" value="WNT5A-dependent internalization of FZD2, FZD5 and ROR2"/>
</dbReference>
<dbReference type="BioGRID-ORCS" id="57265">
    <property type="hits" value="1 hit in 81 CRISPR screens"/>
</dbReference>
<dbReference type="ChiTaRS" id="Fzd2">
    <property type="organism name" value="mouse"/>
</dbReference>
<dbReference type="PRO" id="PR:Q9JIP6"/>
<dbReference type="Proteomes" id="UP000000589">
    <property type="component" value="Chromosome 11"/>
</dbReference>
<dbReference type="RNAct" id="Q9JIP6">
    <property type="molecule type" value="protein"/>
</dbReference>
<dbReference type="Bgee" id="ENSMUSG00000050288">
    <property type="expression patterns" value="Expressed in metanephric mesenchyme and 246 other cell types or tissues"/>
</dbReference>
<dbReference type="GO" id="GO:0005737">
    <property type="term" value="C:cytoplasm"/>
    <property type="evidence" value="ECO:0007669"/>
    <property type="project" value="Ensembl"/>
</dbReference>
<dbReference type="GO" id="GO:0005886">
    <property type="term" value="C:plasma membrane"/>
    <property type="evidence" value="ECO:0007669"/>
    <property type="project" value="UniProtKB-SubCell"/>
</dbReference>
<dbReference type="GO" id="GO:0004930">
    <property type="term" value="F:G protein-coupled receptor activity"/>
    <property type="evidence" value="ECO:0007669"/>
    <property type="project" value="UniProtKB-KW"/>
</dbReference>
<dbReference type="GO" id="GO:0030165">
    <property type="term" value="F:PDZ domain binding"/>
    <property type="evidence" value="ECO:0007669"/>
    <property type="project" value="Ensembl"/>
</dbReference>
<dbReference type="GO" id="GO:0042813">
    <property type="term" value="F:Wnt receptor activity"/>
    <property type="evidence" value="ECO:0000314"/>
    <property type="project" value="MGI"/>
</dbReference>
<dbReference type="GO" id="GO:0060070">
    <property type="term" value="P:canonical Wnt signaling pathway"/>
    <property type="evidence" value="ECO:0007669"/>
    <property type="project" value="Ensembl"/>
</dbReference>
<dbReference type="GO" id="GO:0007267">
    <property type="term" value="P:cell-cell signaling"/>
    <property type="evidence" value="ECO:0000314"/>
    <property type="project" value="MGI"/>
</dbReference>
<dbReference type="GO" id="GO:0090103">
    <property type="term" value="P:cochlea morphogenesis"/>
    <property type="evidence" value="ECO:0000316"/>
    <property type="project" value="MGI"/>
</dbReference>
<dbReference type="GO" id="GO:0045446">
    <property type="term" value="P:endothelial cell differentiation"/>
    <property type="evidence" value="ECO:0000314"/>
    <property type="project" value="MGI"/>
</dbReference>
<dbReference type="GO" id="GO:0060022">
    <property type="term" value="P:hard palate development"/>
    <property type="evidence" value="ECO:0000315"/>
    <property type="project" value="MGI"/>
</dbReference>
<dbReference type="GO" id="GO:0060119">
    <property type="term" value="P:inner ear receptor cell development"/>
    <property type="evidence" value="ECO:0000316"/>
    <property type="project" value="MGI"/>
</dbReference>
<dbReference type="GO" id="GO:0003149">
    <property type="term" value="P:membranous septum morphogenesis"/>
    <property type="evidence" value="ECO:0000316"/>
    <property type="project" value="MGI"/>
</dbReference>
<dbReference type="GO" id="GO:0003150">
    <property type="term" value="P:muscular septum morphogenesis"/>
    <property type="evidence" value="ECO:0000316"/>
    <property type="project" value="MGI"/>
</dbReference>
<dbReference type="GO" id="GO:0003151">
    <property type="term" value="P:outflow tract morphogenesis"/>
    <property type="evidence" value="ECO:0000316"/>
    <property type="project" value="MGI"/>
</dbReference>
<dbReference type="GO" id="GO:0045893">
    <property type="term" value="P:positive regulation of DNA-templated transcription"/>
    <property type="evidence" value="ECO:0007669"/>
    <property type="project" value="Ensembl"/>
</dbReference>
<dbReference type="GO" id="GO:0007608">
    <property type="term" value="P:sensory perception of smell"/>
    <property type="evidence" value="ECO:0000315"/>
    <property type="project" value="MGI"/>
</dbReference>
<dbReference type="GO" id="GO:0060412">
    <property type="term" value="P:ventricular septum morphogenesis"/>
    <property type="evidence" value="ECO:0000316"/>
    <property type="project" value="MGI"/>
</dbReference>
<dbReference type="CDD" id="cd15245">
    <property type="entry name" value="7tmF_FZD2"/>
    <property type="match status" value="1"/>
</dbReference>
<dbReference type="CDD" id="cd07464">
    <property type="entry name" value="CRD_FZ2"/>
    <property type="match status" value="1"/>
</dbReference>
<dbReference type="FunFam" id="1.10.2000.10:FF:000003">
    <property type="entry name" value="Frizzled class receptor 2"/>
    <property type="match status" value="1"/>
</dbReference>
<dbReference type="FunFam" id="1.20.1070.10:FF:000029">
    <property type="entry name" value="Frizzled class receptor 2"/>
    <property type="match status" value="1"/>
</dbReference>
<dbReference type="Gene3D" id="1.10.2000.10">
    <property type="entry name" value="Frizzled cysteine-rich domain"/>
    <property type="match status" value="1"/>
</dbReference>
<dbReference type="Gene3D" id="1.20.1070.10">
    <property type="entry name" value="Rhodopsin 7-helix transmembrane proteins"/>
    <property type="match status" value="1"/>
</dbReference>
<dbReference type="InterPro" id="IPR015526">
    <property type="entry name" value="Frizzled/SFRP"/>
</dbReference>
<dbReference type="InterPro" id="IPR000539">
    <property type="entry name" value="Frizzled/Smoothened_7TM"/>
</dbReference>
<dbReference type="InterPro" id="IPR020067">
    <property type="entry name" value="Frizzled_dom"/>
</dbReference>
<dbReference type="InterPro" id="IPR036790">
    <property type="entry name" value="Frizzled_dom_sf"/>
</dbReference>
<dbReference type="InterPro" id="IPR041778">
    <property type="entry name" value="FZ2_CRD"/>
</dbReference>
<dbReference type="InterPro" id="IPR017981">
    <property type="entry name" value="GPCR_2-like_7TM"/>
</dbReference>
<dbReference type="PANTHER" id="PTHR11309">
    <property type="entry name" value="FRIZZLED"/>
    <property type="match status" value="1"/>
</dbReference>
<dbReference type="PANTHER" id="PTHR11309:SF34">
    <property type="entry name" value="FRIZZLED-2"/>
    <property type="match status" value="1"/>
</dbReference>
<dbReference type="Pfam" id="PF01534">
    <property type="entry name" value="Frizzled"/>
    <property type="match status" value="1"/>
</dbReference>
<dbReference type="Pfam" id="PF01392">
    <property type="entry name" value="Fz"/>
    <property type="match status" value="1"/>
</dbReference>
<dbReference type="PRINTS" id="PR00489">
    <property type="entry name" value="FRIZZLED"/>
</dbReference>
<dbReference type="SMART" id="SM00063">
    <property type="entry name" value="FRI"/>
    <property type="match status" value="1"/>
</dbReference>
<dbReference type="SMART" id="SM01330">
    <property type="entry name" value="Frizzled"/>
    <property type="match status" value="1"/>
</dbReference>
<dbReference type="SUPFAM" id="SSF63501">
    <property type="entry name" value="Frizzled cysteine-rich domain"/>
    <property type="match status" value="1"/>
</dbReference>
<dbReference type="PROSITE" id="PS50038">
    <property type="entry name" value="FZ"/>
    <property type="match status" value="1"/>
</dbReference>
<dbReference type="PROSITE" id="PS50261">
    <property type="entry name" value="G_PROTEIN_RECEP_F2_4"/>
    <property type="match status" value="1"/>
</dbReference>
<feature type="signal peptide" evidence="3">
    <location>
        <begin position="1"/>
        <end position="28"/>
    </location>
</feature>
<feature type="chain" id="PRO_0000012979" description="Frizzled-2">
    <location>
        <begin position="29"/>
        <end position="570"/>
    </location>
</feature>
<feature type="topological domain" description="Extracellular" evidence="3">
    <location>
        <begin position="29"/>
        <end position="252"/>
    </location>
</feature>
<feature type="transmembrane region" description="Helical; Name=1" evidence="3">
    <location>
        <begin position="253"/>
        <end position="273"/>
    </location>
</feature>
<feature type="topological domain" description="Cytoplasmic" evidence="3">
    <location>
        <begin position="274"/>
        <end position="284"/>
    </location>
</feature>
<feature type="transmembrane region" description="Helical; Name=2" evidence="3">
    <location>
        <begin position="285"/>
        <end position="305"/>
    </location>
</feature>
<feature type="topological domain" description="Extracellular" evidence="3">
    <location>
        <begin position="306"/>
        <end position="332"/>
    </location>
</feature>
<feature type="transmembrane region" description="Helical; Name=3" evidence="3">
    <location>
        <begin position="333"/>
        <end position="353"/>
    </location>
</feature>
<feature type="topological domain" description="Cytoplasmic" evidence="3">
    <location>
        <begin position="354"/>
        <end position="375"/>
    </location>
</feature>
<feature type="transmembrane region" description="Helical; Name=4" evidence="3">
    <location>
        <begin position="376"/>
        <end position="396"/>
    </location>
</feature>
<feature type="topological domain" description="Extracellular" evidence="3">
    <location>
        <begin position="397"/>
        <end position="419"/>
    </location>
</feature>
<feature type="transmembrane region" description="Helical; Name=5" evidence="3">
    <location>
        <begin position="420"/>
        <end position="440"/>
    </location>
</feature>
<feature type="topological domain" description="Cytoplasmic" evidence="3">
    <location>
        <begin position="441"/>
        <end position="466"/>
    </location>
</feature>
<feature type="transmembrane region" description="Helical; Name=6" evidence="3">
    <location>
        <begin position="467"/>
        <end position="487"/>
    </location>
</feature>
<feature type="topological domain" description="Extracellular" evidence="3">
    <location>
        <begin position="488"/>
        <end position="524"/>
    </location>
</feature>
<feature type="transmembrane region" description="Helical; Name=7" evidence="3">
    <location>
        <begin position="525"/>
        <end position="545"/>
    </location>
</feature>
<feature type="topological domain" description="Cytoplasmic" evidence="3">
    <location>
        <begin position="546"/>
        <end position="570"/>
    </location>
</feature>
<feature type="domain" description="FZ" evidence="4">
    <location>
        <begin position="39"/>
        <end position="158"/>
    </location>
</feature>
<feature type="region of interest" description="Disordered" evidence="5">
    <location>
        <begin position="166"/>
        <end position="194"/>
    </location>
</feature>
<feature type="short sequence motif" description="Lys-Thr-X-X-X-Trp motif, mediates interaction with the PDZ domain of Dvl family members" evidence="1">
    <location>
        <begin position="548"/>
        <end position="553"/>
    </location>
</feature>
<feature type="short sequence motif" description="PDZ-binding">
    <location>
        <begin position="568"/>
        <end position="570"/>
    </location>
</feature>
<feature type="compositionally biased region" description="Gly residues" evidence="5">
    <location>
        <begin position="179"/>
        <end position="193"/>
    </location>
</feature>
<feature type="glycosylation site" description="N-linked (GlcNAc...) asparagine" evidence="3">
    <location>
        <position position="58"/>
    </location>
</feature>
<feature type="glycosylation site" description="N-linked (GlcNAc...) asparagine" evidence="3">
    <location>
        <position position="159"/>
    </location>
</feature>
<feature type="disulfide bond" evidence="4">
    <location>
        <begin position="44"/>
        <end position="105"/>
    </location>
</feature>
<feature type="disulfide bond" evidence="4">
    <location>
        <begin position="52"/>
        <end position="98"/>
    </location>
</feature>
<feature type="disulfide bond" evidence="4">
    <location>
        <begin position="89"/>
        <end position="126"/>
    </location>
</feature>
<feature type="disulfide bond" evidence="4">
    <location>
        <begin position="115"/>
        <end position="155"/>
    </location>
</feature>
<feature type="disulfide bond" evidence="4">
    <location>
        <begin position="119"/>
        <end position="143"/>
    </location>
</feature>
<feature type="sequence conflict" description="In Ref. 3; AAD28286." evidence="6" ref="3">
    <original>E</original>
    <variation>K</variation>
    <location>
        <position position="307"/>
    </location>
</feature>
<sequence>MRARSALPRSALPRLLLPLLLLPAAGPAQFHGEKGISIPDHGFCQPISIPLCTDIAYNQTIMPNLLGHTNQEDAGLEVHQFYPLVKVQCSPELRFFLCSMYAPVCTVLEQAIPPCRSICERARQGCEALMNKFGFQWPERLRCEHFPRHGAEQICVGQNHSEDGAPALLTTAPPSGLQPGAGGTPGGPGGGGSPPRYATLEHPFHCPRVLKVPSYLSYKFLGERDCAAPCEPARPDGSMFFSQEETRFARLWILTWSVLCCASTFFTVTTYLVDMQRFRYPERPIIFLSGCYTMVSVAYIAGFVLQERVVCNERFSEDGYRTVVQGTKKEGCTILFMMLYFFSMASSIWWVILSLTWFLAAGMKWGHEAIEANSQYFHLAAWAVPAVKTITILAMGQIDGDLLSGVCFVGLNSLDPLRGFVLAPLFVYLFIGTSFLLAGFVSLFRIRTIMKHDGTKTEKLERLMVRIGVFSVLYTVPATIVIACYFYEQAFREHWERSWVSQHCKSLAIPCPAHYTPRMSPDFTVYMIKYLMTLIVGITSGFWIWSGKTLHSWRKFYTRLTNSRHGETTV</sequence>
<accession>Q9JIP6</accession>
<accession>Q810M0</accession>
<accession>Q9JIP5</accession>
<accession>Q9WUJ2</accession>
<gene>
    <name type="primary">Fzd2</name>
    <name type="synonym">Fzd10</name>
</gene>
<organism>
    <name type="scientific">Mus musculus</name>
    <name type="common">Mouse</name>
    <dbReference type="NCBI Taxonomy" id="10090"/>
    <lineage>
        <taxon>Eukaryota</taxon>
        <taxon>Metazoa</taxon>
        <taxon>Chordata</taxon>
        <taxon>Craniata</taxon>
        <taxon>Vertebrata</taxon>
        <taxon>Euteleostomi</taxon>
        <taxon>Mammalia</taxon>
        <taxon>Eutheria</taxon>
        <taxon>Euarchontoglires</taxon>
        <taxon>Glires</taxon>
        <taxon>Rodentia</taxon>
        <taxon>Myomorpha</taxon>
        <taxon>Muroidea</taxon>
        <taxon>Muridae</taxon>
        <taxon>Murinae</taxon>
        <taxon>Mus</taxon>
        <taxon>Mus</taxon>
    </lineage>
</organism>
<evidence type="ECO:0000250" key="1"/>
<evidence type="ECO:0000250" key="2">
    <source>
        <dbReference type="UniProtKB" id="Q14332"/>
    </source>
</evidence>
<evidence type="ECO:0000255" key="3"/>
<evidence type="ECO:0000255" key="4">
    <source>
        <dbReference type="PROSITE-ProRule" id="PRU00090"/>
    </source>
</evidence>
<evidence type="ECO:0000256" key="5">
    <source>
        <dbReference type="SAM" id="MobiDB-lite"/>
    </source>
</evidence>
<evidence type="ECO:0000305" key="6"/>
<proteinExistence type="evidence at transcript level"/>
<protein>
    <recommendedName>
        <fullName>Frizzled-2</fullName>
        <shortName>Fz-2</shortName>
        <shortName>mFz2</shortName>
    </recommendedName>
    <alternativeName>
        <fullName>Frizzled-10</fullName>
        <shortName>Fz-10</shortName>
        <shortName>mFz10</shortName>
    </alternativeName>
</protein>
<reference key="1">
    <citation type="journal article" date="2000" name="Biochem. J.">
        <title>Structure and expression of a novel frizzled gene isolated from the developing mouse gut.</title>
        <authorList>
            <person name="Malik T.H."/>
            <person name="Shivdasani R.A."/>
        </authorList>
    </citation>
    <scope>NUCLEOTIDE SEQUENCE [MRNA]</scope>
    <source>
        <strain>ICR</strain>
        <tissue>Fetal intestine</tissue>
    </source>
</reference>
<reference key="2">
    <citation type="journal article" date="2004" name="Genome Res.">
        <title>The status, quality, and expansion of the NIH full-length cDNA project: the Mammalian Gene Collection (MGC).</title>
        <authorList>
            <consortium name="The MGC Project Team"/>
        </authorList>
    </citation>
    <scope>NUCLEOTIDE SEQUENCE [LARGE SCALE MRNA]</scope>
    <source>
        <strain>C57BL/6J</strain>
        <tissue>Brain</tissue>
        <tissue>Limb</tissue>
    </source>
</reference>
<reference key="3">
    <citation type="submission" date="1999-03" db="EMBL/GenBank/DDBJ databases">
        <title>Characterization of the wnt signaling cascade in the TRAMP transgenic mouse model of prostate cancer.</title>
        <authorList>
            <person name="Johnson M.A."/>
            <person name="Greenberg N.M."/>
        </authorList>
    </citation>
    <scope>NUCLEOTIDE SEQUENCE [MRNA] OF 172-312</scope>
    <source>
        <strain>C57BL/6J</strain>
        <tissue>Prostate</tissue>
    </source>
</reference>
<name>FZD2_MOUSE</name>